<comment type="function">
    <text evidence="1">Possible adhesion molecule with a role in early hematopoiesis by mediating the attachment of stem cells to the bone marrow extracellular matrix or directly to stromal cells. Could act as a scaffold for the attachment of lineage specific glycans, allowing stem cells to bind to lectins expressed by stromal cells or other marrow components. Presents carbohydrate ligands to selectins (By similarity).</text>
</comment>
<comment type="subcellular location">
    <subcellularLocation>
        <location>Membrane</location>
        <topology>Single-pass type I membrane protein</topology>
    </subcellularLocation>
</comment>
<comment type="alternative products">
    <event type="alternative splicing"/>
    <isoform>
        <id>Q64314-1</id>
        <name>Long</name>
        <sequence type="displayed"/>
    </isoform>
    <isoform>
        <id>Q64314-2</id>
        <name>Short</name>
        <sequence type="described" ref="VSP_004161 VSP_004162"/>
    </isoform>
</comment>
<comment type="tissue specificity">
    <text evidence="4 6">Expressed in the kidney where it is detected in the thin limb of Henle's loop (at protein level) (PubMed:31605441). Highly expressed in hematopoietic progenitor cell lines, brain and testis, and moderately in the thymus, spleen, and bone marrow, but not in adult liver (PubMed:1709048).</text>
</comment>
<comment type="PTM">
    <text evidence="1">Highly glycosylated.</text>
</comment>
<comment type="PTM">
    <text evidence="1">Phosphorylated on serine residues by PKC.</text>
</comment>
<comment type="similarity">
    <text evidence="7">Belongs to the CD34 family.</text>
</comment>
<sequence length="382" mass="40983">MQVHRDTRAGLLLPWRWVALCLMSLLHLNNLTSATTETSTQGISPSVPTNESVEENITSSIPGSTSHYLIYQDSSKTTPAISETMVNFTVTSGIPSGSGTPHTFSQPQTSPTGILPTTSDSISTSEMTWKSSLPSINVSDYSPNNSSFEMTSPTEPYAYTSSSAPSAIKGEIKCSGIREVRLAQGICLELSEASSCEEFKKEKGEDLIQILCEKEEAEADAGASVCSLLLAQSEVRPECLLMVLANSTELPSKLQLMEKHQSDLRKLGIQSFNKQDIGSHQSYSRKTLIALVTSGVLLAILGTTGYFLMNRRSWSPTGERLGEDPYYTENGGGQGYSSGPGASPETQGKANVTRGAQENGTGQATSRNGHSARQHVVADTEL</sequence>
<keyword id="KW-0025">Alternative splicing</keyword>
<keyword id="KW-0130">Cell adhesion</keyword>
<keyword id="KW-0325">Glycoprotein</keyword>
<keyword id="KW-0472">Membrane</keyword>
<keyword id="KW-0597">Phosphoprotein</keyword>
<keyword id="KW-1185">Reference proteome</keyword>
<keyword id="KW-0732">Signal</keyword>
<keyword id="KW-0812">Transmembrane</keyword>
<keyword id="KW-1133">Transmembrane helix</keyword>
<proteinExistence type="evidence at protein level"/>
<protein>
    <recommendedName>
        <fullName>Hematopoietic progenitor cell antigen CD34</fullName>
    </recommendedName>
    <cdAntigenName>CD34</cdAntigenName>
</protein>
<gene>
    <name type="primary">Cd34</name>
</gene>
<accession>Q64314</accession>
<accession>Q62550</accession>
<accession>Q62551</accession>
<name>CD34_MOUSE</name>
<organism>
    <name type="scientific">Mus musculus</name>
    <name type="common">Mouse</name>
    <dbReference type="NCBI Taxonomy" id="10090"/>
    <lineage>
        <taxon>Eukaryota</taxon>
        <taxon>Metazoa</taxon>
        <taxon>Chordata</taxon>
        <taxon>Craniata</taxon>
        <taxon>Vertebrata</taxon>
        <taxon>Euteleostomi</taxon>
        <taxon>Mammalia</taxon>
        <taxon>Eutheria</taxon>
        <taxon>Euarchontoglires</taxon>
        <taxon>Glires</taxon>
        <taxon>Rodentia</taxon>
        <taxon>Myomorpha</taxon>
        <taxon>Muroidea</taxon>
        <taxon>Muridae</taxon>
        <taxon>Murinae</taxon>
        <taxon>Mus</taxon>
        <taxon>Mus</taxon>
    </lineage>
</organism>
<evidence type="ECO:0000250" key="1"/>
<evidence type="ECO:0000255" key="2"/>
<evidence type="ECO:0000256" key="3">
    <source>
        <dbReference type="SAM" id="MobiDB-lite"/>
    </source>
</evidence>
<evidence type="ECO:0000269" key="4">
    <source>
    </source>
</evidence>
<evidence type="ECO:0000269" key="5">
    <source>
    </source>
</evidence>
<evidence type="ECO:0000269" key="6">
    <source>
    </source>
</evidence>
<evidence type="ECO:0000305" key="7"/>
<evidence type="ECO:0007744" key="8">
    <source>
    </source>
</evidence>
<evidence type="ECO:0007744" key="9">
    <source>
    </source>
</evidence>
<dbReference type="EMBL" id="S69293">
    <property type="protein sequence ID" value="AAB19246.1"/>
    <property type="molecule type" value="mRNA"/>
</dbReference>
<dbReference type="EMBL" id="S69302">
    <property type="status" value="NOT_ANNOTATED_CDS"/>
    <property type="molecule type" value="Genomic_DNA"/>
</dbReference>
<dbReference type="EMBL" id="S69295">
    <property type="status" value="NOT_ANNOTATED_CDS"/>
    <property type="molecule type" value="Genomic_DNA"/>
</dbReference>
<dbReference type="EMBL" id="S69299">
    <property type="protein sequence ID" value="AAB22108.1"/>
    <property type="status" value="ALT_SEQ"/>
    <property type="molecule type" value="mRNA"/>
</dbReference>
<dbReference type="EMBL" id="S69301">
    <property type="protein sequence ID" value="AAB22109.1"/>
    <property type="molecule type" value="mRNA"/>
</dbReference>
<dbReference type="EMBL" id="BC006607">
    <property type="protein sequence ID" value="AAH06607.1"/>
    <property type="molecule type" value="mRNA"/>
</dbReference>
<dbReference type="CCDS" id="CCDS15640.1">
    <molecule id="Q64314-1"/>
</dbReference>
<dbReference type="CCDS" id="CCDS48490.1">
    <molecule id="Q64314-2"/>
</dbReference>
<dbReference type="PIR" id="I65354">
    <property type="entry name" value="I65354"/>
</dbReference>
<dbReference type="RefSeq" id="NP_001104529.1">
    <molecule id="Q64314-2"/>
    <property type="nucleotide sequence ID" value="NM_001111059.2"/>
</dbReference>
<dbReference type="RefSeq" id="NP_598415.1">
    <molecule id="Q64314-1"/>
    <property type="nucleotide sequence ID" value="NM_133654.4"/>
</dbReference>
<dbReference type="SMR" id="Q64314"/>
<dbReference type="FunCoup" id="Q64314">
    <property type="interactions" value="410"/>
</dbReference>
<dbReference type="STRING" id="10090.ENSMUSP00000016638"/>
<dbReference type="GlyCosmos" id="Q64314">
    <property type="glycosylation" value="7 sites, No reported glycans"/>
</dbReference>
<dbReference type="GlyGen" id="Q64314">
    <property type="glycosylation" value="9 sites, 1 N-linked glycan (1 site), 1 O-linked glycan (1 site)"/>
</dbReference>
<dbReference type="iPTMnet" id="Q64314"/>
<dbReference type="PhosphoSitePlus" id="Q64314"/>
<dbReference type="jPOST" id="Q64314"/>
<dbReference type="PaxDb" id="10090-ENSMUSP00000016638"/>
<dbReference type="ProteomicsDB" id="281265">
    <molecule id="Q64314-1"/>
</dbReference>
<dbReference type="ProteomicsDB" id="281266">
    <molecule id="Q64314-2"/>
</dbReference>
<dbReference type="Pumba" id="Q64314"/>
<dbReference type="ABCD" id="Q64314">
    <property type="antibodies" value="1 sequenced antibody"/>
</dbReference>
<dbReference type="Antibodypedia" id="3498">
    <property type="antibodies" value="3411 antibodies from 61 providers"/>
</dbReference>
<dbReference type="DNASU" id="12490"/>
<dbReference type="Ensembl" id="ENSMUST00000016638.8">
    <molecule id="Q64314-1"/>
    <property type="protein sequence ID" value="ENSMUSP00000016638.3"/>
    <property type="gene ID" value="ENSMUSG00000016494.10"/>
</dbReference>
<dbReference type="Ensembl" id="ENSMUST00000110815.9">
    <molecule id="Q64314-2"/>
    <property type="protein sequence ID" value="ENSMUSP00000106439.3"/>
    <property type="gene ID" value="ENSMUSG00000016494.10"/>
</dbReference>
<dbReference type="GeneID" id="12490"/>
<dbReference type="KEGG" id="mmu:12490"/>
<dbReference type="UCSC" id="uc007eeq.2">
    <molecule id="Q64314-1"/>
    <property type="organism name" value="mouse"/>
</dbReference>
<dbReference type="AGR" id="MGI:88329"/>
<dbReference type="CTD" id="947"/>
<dbReference type="MGI" id="MGI:88329">
    <property type="gene designation" value="Cd34"/>
</dbReference>
<dbReference type="VEuPathDB" id="HostDB:ENSMUSG00000016494"/>
<dbReference type="eggNOG" id="ENOG502RYP9">
    <property type="taxonomic scope" value="Eukaryota"/>
</dbReference>
<dbReference type="GeneTree" id="ENSGT00390000008414"/>
<dbReference type="HOGENOM" id="CLU_060339_0_0_1"/>
<dbReference type="InParanoid" id="Q64314"/>
<dbReference type="OMA" id="GEIKCAG"/>
<dbReference type="OrthoDB" id="8945512at2759"/>
<dbReference type="PhylomeDB" id="Q64314"/>
<dbReference type="TreeFam" id="TF335795"/>
<dbReference type="Reactome" id="R-MMU-198933">
    <property type="pathway name" value="Immunoregulatory interactions between a Lymphoid and a non-Lymphoid cell"/>
</dbReference>
<dbReference type="BioGRID-ORCS" id="12490">
    <property type="hits" value="1 hit in 79 CRISPR screens"/>
</dbReference>
<dbReference type="ChiTaRS" id="Cd34">
    <property type="organism name" value="mouse"/>
</dbReference>
<dbReference type="PRO" id="PR:Q64314"/>
<dbReference type="Proteomes" id="UP000000589">
    <property type="component" value="Chromosome 1"/>
</dbReference>
<dbReference type="RNAct" id="Q64314">
    <property type="molecule type" value="protein"/>
</dbReference>
<dbReference type="Bgee" id="ENSMUSG00000016494">
    <property type="expression patterns" value="Expressed in brain blood vessel and 276 other cell types or tissues"/>
</dbReference>
<dbReference type="ExpressionAtlas" id="Q64314">
    <property type="expression patterns" value="baseline and differential"/>
</dbReference>
<dbReference type="GO" id="GO:0016324">
    <property type="term" value="C:apical plasma membrane"/>
    <property type="evidence" value="ECO:0000250"/>
    <property type="project" value="UniProtKB"/>
</dbReference>
<dbReference type="GO" id="GO:0009925">
    <property type="term" value="C:basal plasma membrane"/>
    <property type="evidence" value="ECO:0000250"/>
    <property type="project" value="UniProtKB"/>
</dbReference>
<dbReference type="GO" id="GO:0071944">
    <property type="term" value="C:cell periphery"/>
    <property type="evidence" value="ECO:0000314"/>
    <property type="project" value="MGI"/>
</dbReference>
<dbReference type="GO" id="GO:0009986">
    <property type="term" value="C:cell surface"/>
    <property type="evidence" value="ECO:0000314"/>
    <property type="project" value="UniProtKB"/>
</dbReference>
<dbReference type="GO" id="GO:0005737">
    <property type="term" value="C:cytoplasm"/>
    <property type="evidence" value="ECO:0000314"/>
    <property type="project" value="MGI"/>
</dbReference>
<dbReference type="GO" id="GO:0009897">
    <property type="term" value="C:external side of plasma membrane"/>
    <property type="evidence" value="ECO:0000314"/>
    <property type="project" value="MGI"/>
</dbReference>
<dbReference type="GO" id="GO:0005576">
    <property type="term" value="C:extracellular region"/>
    <property type="evidence" value="ECO:0000314"/>
    <property type="project" value="MGI"/>
</dbReference>
<dbReference type="GO" id="GO:0036053">
    <property type="term" value="C:glomerular endothelium fenestra"/>
    <property type="evidence" value="ECO:0000250"/>
    <property type="project" value="UniProtKB"/>
</dbReference>
<dbReference type="GO" id="GO:0045171">
    <property type="term" value="C:intercellular bridge"/>
    <property type="evidence" value="ECO:0000250"/>
    <property type="project" value="UniProtKB"/>
</dbReference>
<dbReference type="GO" id="GO:0005764">
    <property type="term" value="C:lysosome"/>
    <property type="evidence" value="ECO:0000250"/>
    <property type="project" value="UniProtKB"/>
</dbReference>
<dbReference type="GO" id="GO:0016020">
    <property type="term" value="C:membrane"/>
    <property type="evidence" value="ECO:0000314"/>
    <property type="project" value="MGI"/>
</dbReference>
<dbReference type="GO" id="GO:0048471">
    <property type="term" value="C:perinuclear region of cytoplasm"/>
    <property type="evidence" value="ECO:0000250"/>
    <property type="project" value="UniProtKB"/>
</dbReference>
<dbReference type="GO" id="GO:0005886">
    <property type="term" value="C:plasma membrane"/>
    <property type="evidence" value="ECO:0000250"/>
    <property type="project" value="UniProtKB"/>
</dbReference>
<dbReference type="GO" id="GO:0030246">
    <property type="term" value="F:carbohydrate binding"/>
    <property type="evidence" value="ECO:0000250"/>
    <property type="project" value="UniProtKB"/>
</dbReference>
<dbReference type="GO" id="GO:0061629">
    <property type="term" value="F:RNA polymerase II-specific DNA-binding transcription factor binding"/>
    <property type="evidence" value="ECO:0007669"/>
    <property type="project" value="Ensembl"/>
</dbReference>
<dbReference type="GO" id="GO:0043199">
    <property type="term" value="F:sulfate binding"/>
    <property type="evidence" value="ECO:0000314"/>
    <property type="project" value="MGI"/>
</dbReference>
<dbReference type="GO" id="GO:0098609">
    <property type="term" value="P:cell-cell adhesion"/>
    <property type="evidence" value="ECO:0000250"/>
    <property type="project" value="UniProtKB"/>
</dbReference>
<dbReference type="GO" id="GO:0001935">
    <property type="term" value="P:endothelial cell proliferation"/>
    <property type="evidence" value="ECO:0007669"/>
    <property type="project" value="Ensembl"/>
</dbReference>
<dbReference type="GO" id="GO:0071971">
    <property type="term" value="P:extracellular exosome assembly"/>
    <property type="evidence" value="ECO:0007669"/>
    <property type="project" value="Ensembl"/>
</dbReference>
<dbReference type="GO" id="GO:0072011">
    <property type="term" value="P:glomerular endothelium development"/>
    <property type="evidence" value="ECO:0007669"/>
    <property type="project" value="Ensembl"/>
</dbReference>
<dbReference type="GO" id="GO:0003094">
    <property type="term" value="P:glomerular filtration"/>
    <property type="evidence" value="ECO:0000250"/>
    <property type="project" value="UniProtKB"/>
</dbReference>
<dbReference type="GO" id="GO:0071425">
    <property type="term" value="P:hematopoietic stem cell proliferation"/>
    <property type="evidence" value="ECO:0007669"/>
    <property type="project" value="Ensembl"/>
</dbReference>
<dbReference type="GO" id="GO:0050900">
    <property type="term" value="P:leukocyte migration"/>
    <property type="evidence" value="ECO:0000315"/>
    <property type="project" value="MGI"/>
</dbReference>
<dbReference type="GO" id="GO:0035759">
    <property type="term" value="P:mesangial cell-matrix adhesion"/>
    <property type="evidence" value="ECO:0000250"/>
    <property type="project" value="UniProtKB"/>
</dbReference>
<dbReference type="GO" id="GO:0072254">
    <property type="term" value="P:metanephric glomerular mesangial cell differentiation"/>
    <property type="evidence" value="ECO:0007669"/>
    <property type="project" value="Ensembl"/>
</dbReference>
<dbReference type="GO" id="GO:0032703">
    <property type="term" value="P:negative regulation of interleukin-2 production"/>
    <property type="evidence" value="ECO:0007669"/>
    <property type="project" value="Ensembl"/>
</dbReference>
<dbReference type="GO" id="GO:0038001">
    <property type="term" value="P:paracrine signaling"/>
    <property type="evidence" value="ECO:0007669"/>
    <property type="project" value="Ensembl"/>
</dbReference>
<dbReference type="GO" id="GO:0045766">
    <property type="term" value="P:positive regulation of angiogenesis"/>
    <property type="evidence" value="ECO:0000250"/>
    <property type="project" value="UniProtKB"/>
</dbReference>
<dbReference type="GO" id="GO:0071657">
    <property type="term" value="P:positive regulation of granulocyte colony-stimulating factor production"/>
    <property type="evidence" value="ECO:0007669"/>
    <property type="project" value="Ensembl"/>
</dbReference>
<dbReference type="GO" id="GO:0042482">
    <property type="term" value="P:positive regulation of odontogenesis"/>
    <property type="evidence" value="ECO:0000250"/>
    <property type="project" value="UniProtKB"/>
</dbReference>
<dbReference type="GO" id="GO:2001214">
    <property type="term" value="P:positive regulation of vasculogenesis"/>
    <property type="evidence" value="ECO:0000250"/>
    <property type="project" value="UniProtKB"/>
</dbReference>
<dbReference type="GO" id="GO:0007165">
    <property type="term" value="P:signal transduction"/>
    <property type="evidence" value="ECO:0007669"/>
    <property type="project" value="Ensembl"/>
</dbReference>
<dbReference type="GO" id="GO:0001894">
    <property type="term" value="P:tissue homeostasis"/>
    <property type="evidence" value="ECO:0000250"/>
    <property type="project" value="UniProtKB"/>
</dbReference>
<dbReference type="GO" id="GO:0060290">
    <property type="term" value="P:transdifferentiation"/>
    <property type="evidence" value="ECO:0007669"/>
    <property type="project" value="Ensembl"/>
</dbReference>
<dbReference type="GO" id="GO:0061042">
    <property type="term" value="P:vascular wound healing"/>
    <property type="evidence" value="ECO:0007669"/>
    <property type="project" value="Ensembl"/>
</dbReference>
<dbReference type="InterPro" id="IPR008083">
    <property type="entry name" value="CD34"/>
</dbReference>
<dbReference type="InterPro" id="IPR013836">
    <property type="entry name" value="CD34/Podocalyxin"/>
</dbReference>
<dbReference type="PANTHER" id="PTHR16677">
    <property type="entry name" value="HEMATOPOIETIC PROGENITOR CELL ANTIGEN CD34"/>
    <property type="match status" value="1"/>
</dbReference>
<dbReference type="PANTHER" id="PTHR16677:SF1">
    <property type="entry name" value="HEMATOPOIETIC PROGENITOR CELL ANTIGEN CD34"/>
    <property type="match status" value="1"/>
</dbReference>
<dbReference type="Pfam" id="PF06365">
    <property type="entry name" value="CD34_antigen"/>
    <property type="match status" value="1"/>
</dbReference>
<dbReference type="PRINTS" id="PR01700">
    <property type="entry name" value="CD34ANTIGEN"/>
</dbReference>
<reference key="1">
    <citation type="journal article" date="1991" name="Int. Immunol.">
        <title>The gene encoding the stem cell antigen, CD34, is conserved in mouse and expressed in haemopoietic progenitor cell lines, brain, and embryonic fibroblasts.</title>
        <authorList>
            <person name="Brown J."/>
            <person name="Greaves M.F."/>
            <person name="Molgaard H.V."/>
        </authorList>
    </citation>
    <scope>NUCLEOTIDE SEQUENCE (ISOFORM LONG)</scope>
    <scope>TISSUE SPECIFICITY</scope>
    <source>
        <strain>129</strain>
        <strain>BALB/cJ</strain>
        <tissue>Bone marrow</tissue>
    </source>
</reference>
<reference key="2">
    <citation type="journal article" date="1992" name="Blood">
        <title>Two types of murine CD34 mRNA generated by alternative splicing.</title>
        <authorList>
            <person name="Suda J."/>
            <person name="Sudo T."/>
            <person name="Ito M."/>
            <person name="Ohno N."/>
            <person name="Yamaguchi Y."/>
            <person name="Suda T."/>
        </authorList>
    </citation>
    <scope>NUCLEOTIDE SEQUENCE (ISOFORMS LONG AND SHORT)</scope>
</reference>
<reference key="3">
    <citation type="journal article" date="2004" name="Genome Res.">
        <title>The status, quality, and expansion of the NIH full-length cDNA project: the Mammalian Gene Collection (MGC).</title>
        <authorList>
            <consortium name="The MGC Project Team"/>
        </authorList>
    </citation>
    <scope>NUCLEOTIDE SEQUENCE [LARGE SCALE MRNA] (ISOFORM LONG)</scope>
    <source>
        <strain>FVB/N</strain>
        <tissue>Mammary gland</tissue>
    </source>
</reference>
<reference key="4">
    <citation type="journal article" date="2005" name="Nat. Biotechnol.">
        <title>Immunoaffinity profiling of tyrosine phosphorylation in cancer cells.</title>
        <authorList>
            <person name="Rush J."/>
            <person name="Moritz A."/>
            <person name="Lee K.A."/>
            <person name="Guo A."/>
            <person name="Goss V.L."/>
            <person name="Spek E.J."/>
            <person name="Zhang H."/>
            <person name="Zha X.-M."/>
            <person name="Polakiewicz R.D."/>
            <person name="Comb M.J."/>
        </authorList>
    </citation>
    <scope>IDENTIFICATION BY MASS SPECTROMETRY [LARGE SCALE ANALYSIS]</scope>
</reference>
<reference key="5">
    <citation type="journal article" date="2007" name="J. Immunol.">
        <title>Quantitative time-resolved phosphoproteomic analysis of mast cell signaling.</title>
        <authorList>
            <person name="Cao L."/>
            <person name="Yu K."/>
            <person name="Banh C."/>
            <person name="Nguyen V."/>
            <person name="Ritz A."/>
            <person name="Raphael B.J."/>
            <person name="Kawakami Y."/>
            <person name="Kawakami T."/>
            <person name="Salomon A.R."/>
        </authorList>
    </citation>
    <scope>PHOSPHORYLATION [LARGE SCALE ANALYSIS] AT TYR-326 AND TYR-336</scope>
    <scope>IDENTIFICATION BY MASS SPECTROMETRY [LARGE SCALE ANALYSIS]</scope>
    <source>
        <tissue>Mast cell</tissue>
    </source>
</reference>
<reference key="6">
    <citation type="journal article" date="2009" name="Mol. Cell. Proteomics">
        <title>The mouse C2C12 myoblast cell surface N-linked glycoproteome: identification, glycosite occupancy, and membrane orientation.</title>
        <authorList>
            <person name="Gundry R.L."/>
            <person name="Raginski K."/>
            <person name="Tarasova Y."/>
            <person name="Tchernyshyov I."/>
            <person name="Bausch-Fluck D."/>
            <person name="Elliott S.T."/>
            <person name="Boheler K.R."/>
            <person name="Van Eyk J.E."/>
            <person name="Wollscheid B."/>
        </authorList>
    </citation>
    <scope>GLYCOSYLATION [LARGE SCALE ANALYSIS] AT ASN-246</scope>
    <source>
        <tissue>Myoblast</tissue>
    </source>
</reference>
<reference key="7">
    <citation type="journal article" date="2010" name="Cell">
        <title>A tissue-specific atlas of mouse protein phosphorylation and expression.</title>
        <authorList>
            <person name="Huttlin E.L."/>
            <person name="Jedrychowski M.P."/>
            <person name="Elias J.E."/>
            <person name="Goswami T."/>
            <person name="Rad R."/>
            <person name="Beausoleil S.A."/>
            <person name="Villen J."/>
            <person name="Haas W."/>
            <person name="Sowa M.E."/>
            <person name="Gygi S.P."/>
        </authorList>
    </citation>
    <scope>PHOSPHORYLATION [LARGE SCALE ANALYSIS] AT SER-343</scope>
    <scope>IDENTIFICATION BY MASS SPECTROMETRY [LARGE SCALE ANALYSIS]</scope>
    <source>
        <tissue>Heart</tissue>
        <tissue>Kidney</tissue>
        <tissue>Lung</tissue>
        <tissue>Pancreas</tissue>
        <tissue>Testis</tissue>
    </source>
</reference>
<reference key="8">
    <citation type="journal article" date="2020" name="FEBS J.">
        <title>Identification and classification of epithelial cells in nephron segments by actin cytoskeleton patterns.</title>
        <authorList>
            <person name="Kumaran G.K."/>
            <person name="Hanukoglu I."/>
        </authorList>
    </citation>
    <scope>TISSUE SPECIFICITY</scope>
</reference>
<feature type="signal peptide" evidence="2">
    <location>
        <begin position="1"/>
        <end position="34"/>
    </location>
</feature>
<feature type="chain" id="PRO_0000020901" description="Hematopoietic progenitor cell antigen CD34">
    <location>
        <begin position="35"/>
        <end position="382"/>
    </location>
</feature>
<feature type="topological domain" description="Extracellular" evidence="2">
    <location>
        <begin position="35"/>
        <end position="287"/>
    </location>
</feature>
<feature type="transmembrane region" description="Helical" evidence="2">
    <location>
        <begin position="288"/>
        <end position="308"/>
    </location>
</feature>
<feature type="topological domain" description="Cytoplasmic" evidence="2">
    <location>
        <begin position="309"/>
        <end position="382"/>
    </location>
</feature>
<feature type="region of interest" description="Disordered" evidence="3">
    <location>
        <begin position="34"/>
        <end position="60"/>
    </location>
</feature>
<feature type="region of interest" description="Disordered" evidence="3">
    <location>
        <begin position="92"/>
        <end position="126"/>
    </location>
</feature>
<feature type="region of interest" description="Disordered" evidence="3">
    <location>
        <begin position="318"/>
        <end position="382"/>
    </location>
</feature>
<feature type="compositionally biased region" description="Polar residues" evidence="3">
    <location>
        <begin position="344"/>
        <end position="371"/>
    </location>
</feature>
<feature type="modified residue" description="Phosphotyrosine" evidence="8">
    <location>
        <position position="326"/>
    </location>
</feature>
<feature type="modified residue" description="Phosphotyrosine" evidence="8">
    <location>
        <position position="336"/>
    </location>
</feature>
<feature type="modified residue" description="Phosphoserine" evidence="9">
    <location>
        <position position="343"/>
    </location>
</feature>
<feature type="glycosylation site" description="N-linked (GlcNAc...) asparagine" evidence="2">
    <location>
        <position position="50"/>
    </location>
</feature>
<feature type="glycosylation site" description="N-linked (GlcNAc...) asparagine" evidence="2">
    <location>
        <position position="56"/>
    </location>
</feature>
<feature type="glycosylation site" description="N-linked (GlcNAc...) asparagine" evidence="2">
    <location>
        <position position="87"/>
    </location>
</feature>
<feature type="glycosylation site" description="N-linked (GlcNAc...) asparagine" evidence="2">
    <location>
        <position position="137"/>
    </location>
</feature>
<feature type="glycosylation site" description="N-linked (GlcNAc...) asparagine" evidence="2">
    <location>
        <position position="144"/>
    </location>
</feature>
<feature type="glycosylation site" description="N-linked (GlcNAc...) asparagine" evidence="2">
    <location>
        <position position="145"/>
    </location>
</feature>
<feature type="glycosylation site" description="N-linked (GlcNAc...) asparagine" evidence="5">
    <location>
        <position position="246"/>
    </location>
</feature>
<feature type="splice variant" id="VSP_004161" description="In isoform Short." evidence="7">
    <original>GEDP</original>
    <variation>ELEP</variation>
    <location>
        <begin position="322"/>
        <end position="325"/>
    </location>
</feature>
<feature type="splice variant" id="VSP_004162" description="In isoform Short." evidence="7">
    <location>
        <begin position="326"/>
        <end position="382"/>
    </location>
</feature>